<comment type="function">
    <text evidence="1">Catalyzes the NADPH-dependent reduction of L-glutamate 5-phosphate into L-glutamate 5-semialdehyde and phosphate. The product spontaneously undergoes cyclization to form 1-pyrroline-5-carboxylate.</text>
</comment>
<comment type="catalytic activity">
    <reaction evidence="1">
        <text>L-glutamate 5-semialdehyde + phosphate + NADP(+) = L-glutamyl 5-phosphate + NADPH + H(+)</text>
        <dbReference type="Rhea" id="RHEA:19541"/>
        <dbReference type="ChEBI" id="CHEBI:15378"/>
        <dbReference type="ChEBI" id="CHEBI:43474"/>
        <dbReference type="ChEBI" id="CHEBI:57783"/>
        <dbReference type="ChEBI" id="CHEBI:58066"/>
        <dbReference type="ChEBI" id="CHEBI:58274"/>
        <dbReference type="ChEBI" id="CHEBI:58349"/>
        <dbReference type="EC" id="1.2.1.41"/>
    </reaction>
</comment>
<comment type="pathway">
    <text evidence="1">Amino-acid biosynthesis; L-proline biosynthesis; L-glutamate 5-semialdehyde from L-glutamate: step 2/2.</text>
</comment>
<comment type="subcellular location">
    <subcellularLocation>
        <location evidence="1">Cytoplasm</location>
    </subcellularLocation>
</comment>
<comment type="similarity">
    <text evidence="1">Belongs to the gamma-glutamyl phosphate reductase family.</text>
</comment>
<comment type="sequence caution" evidence="2">
    <conflict type="erroneous initiation">
        <sequence resource="EMBL-CDS" id="ABK07410"/>
    </conflict>
</comment>
<evidence type="ECO:0000255" key="1">
    <source>
        <dbReference type="HAMAP-Rule" id="MF_00412"/>
    </source>
</evidence>
<evidence type="ECO:0000305" key="2"/>
<organism>
    <name type="scientific">Burkholderia cenocepacia (strain HI2424)</name>
    <dbReference type="NCBI Taxonomy" id="331272"/>
    <lineage>
        <taxon>Bacteria</taxon>
        <taxon>Pseudomonadati</taxon>
        <taxon>Pseudomonadota</taxon>
        <taxon>Betaproteobacteria</taxon>
        <taxon>Burkholderiales</taxon>
        <taxon>Burkholderiaceae</taxon>
        <taxon>Burkholderia</taxon>
        <taxon>Burkholderia cepacia complex</taxon>
    </lineage>
</organism>
<reference key="1">
    <citation type="submission" date="2006-08" db="EMBL/GenBank/DDBJ databases">
        <title>Complete sequence of chromosome 1 of Burkholderia cenocepacia HI2424.</title>
        <authorList>
            <person name="Copeland A."/>
            <person name="Lucas S."/>
            <person name="Lapidus A."/>
            <person name="Barry K."/>
            <person name="Detter J.C."/>
            <person name="Glavina del Rio T."/>
            <person name="Hammon N."/>
            <person name="Israni S."/>
            <person name="Pitluck S."/>
            <person name="Chain P."/>
            <person name="Malfatti S."/>
            <person name="Shin M."/>
            <person name="Vergez L."/>
            <person name="Schmutz J."/>
            <person name="Larimer F."/>
            <person name="Land M."/>
            <person name="Hauser L."/>
            <person name="Kyrpides N."/>
            <person name="Kim E."/>
            <person name="LiPuma J.J."/>
            <person name="Gonzalez C.F."/>
            <person name="Konstantinidis K."/>
            <person name="Tiedje J.M."/>
            <person name="Richardson P."/>
        </authorList>
    </citation>
    <scope>NUCLEOTIDE SEQUENCE [LARGE SCALE GENOMIC DNA]</scope>
    <source>
        <strain>HI2424</strain>
    </source>
</reference>
<keyword id="KW-0028">Amino-acid biosynthesis</keyword>
<keyword id="KW-0963">Cytoplasm</keyword>
<keyword id="KW-0521">NADP</keyword>
<keyword id="KW-0560">Oxidoreductase</keyword>
<keyword id="KW-0641">Proline biosynthesis</keyword>
<sequence>MDIDQYMTDLGRRARHASRAMARASTAAKNAALDAVARAIERDAQALKDANARDVARAREKGLDAAFIDRLTLSDKALNTMVEGLRQVASLADPIGEIGNLKFRPSGIQVGQMRVPLGVIGIIYESRPNVTIDAAALCLKSGNATILRGGSEALESNAALAKLIGEGLEAAGLPQDAVQVVATADRAAVGKLITMTEYVDVIVPRGGKSLIERLINEARVPMIKHLDGICHVYVDDRADLAKALTVCDNAKTHRYGTCNTMETLLVASGIAAKLLPPLGKLYRDKQVELRVDAAARAVLADAGVGPLVDVTEEDWHTEYLAPVLAIKVVDGLDAAIEHINHYGSHHTDAIVTEDHDRAMRFLREVDSASVMVNASTRFADGFEFGLGAEIGISNDKLHARGPVGLEGLTSLKYVVLGHGEGRQ</sequence>
<proteinExistence type="inferred from homology"/>
<dbReference type="EC" id="1.2.1.41" evidence="1"/>
<dbReference type="EMBL" id="CP000458">
    <property type="protein sequence ID" value="ABK07410.1"/>
    <property type="status" value="ALT_INIT"/>
    <property type="molecule type" value="Genomic_DNA"/>
</dbReference>
<dbReference type="RefSeq" id="WP_011544574.1">
    <property type="nucleotide sequence ID" value="NC_008542.1"/>
</dbReference>
<dbReference type="SMR" id="A0K4I3"/>
<dbReference type="KEGG" id="bch:Bcen2424_0657"/>
<dbReference type="HOGENOM" id="CLU_030231_0_0_4"/>
<dbReference type="UniPathway" id="UPA00098">
    <property type="reaction ID" value="UER00360"/>
</dbReference>
<dbReference type="GO" id="GO:0005737">
    <property type="term" value="C:cytoplasm"/>
    <property type="evidence" value="ECO:0007669"/>
    <property type="project" value="UniProtKB-SubCell"/>
</dbReference>
<dbReference type="GO" id="GO:0004350">
    <property type="term" value="F:glutamate-5-semialdehyde dehydrogenase activity"/>
    <property type="evidence" value="ECO:0007669"/>
    <property type="project" value="UniProtKB-UniRule"/>
</dbReference>
<dbReference type="GO" id="GO:0050661">
    <property type="term" value="F:NADP binding"/>
    <property type="evidence" value="ECO:0007669"/>
    <property type="project" value="InterPro"/>
</dbReference>
<dbReference type="GO" id="GO:0055129">
    <property type="term" value="P:L-proline biosynthetic process"/>
    <property type="evidence" value="ECO:0007669"/>
    <property type="project" value="UniProtKB-UniRule"/>
</dbReference>
<dbReference type="CDD" id="cd07079">
    <property type="entry name" value="ALDH_F18-19_ProA-GPR"/>
    <property type="match status" value="1"/>
</dbReference>
<dbReference type="FunFam" id="3.40.309.10:FF:000006">
    <property type="entry name" value="Gamma-glutamyl phosphate reductase"/>
    <property type="match status" value="1"/>
</dbReference>
<dbReference type="Gene3D" id="3.40.605.10">
    <property type="entry name" value="Aldehyde Dehydrogenase, Chain A, domain 1"/>
    <property type="match status" value="1"/>
</dbReference>
<dbReference type="Gene3D" id="3.40.309.10">
    <property type="entry name" value="Aldehyde Dehydrogenase, Chain A, domain 2"/>
    <property type="match status" value="1"/>
</dbReference>
<dbReference type="HAMAP" id="MF_00412">
    <property type="entry name" value="ProA"/>
    <property type="match status" value="1"/>
</dbReference>
<dbReference type="InterPro" id="IPR016161">
    <property type="entry name" value="Ald_DH/histidinol_DH"/>
</dbReference>
<dbReference type="InterPro" id="IPR016163">
    <property type="entry name" value="Ald_DH_C"/>
</dbReference>
<dbReference type="InterPro" id="IPR016162">
    <property type="entry name" value="Ald_DH_N"/>
</dbReference>
<dbReference type="InterPro" id="IPR015590">
    <property type="entry name" value="Aldehyde_DH_dom"/>
</dbReference>
<dbReference type="InterPro" id="IPR020593">
    <property type="entry name" value="G-glutamylP_reductase_CS"/>
</dbReference>
<dbReference type="InterPro" id="IPR012134">
    <property type="entry name" value="Glu-5-SA_DH"/>
</dbReference>
<dbReference type="InterPro" id="IPR000965">
    <property type="entry name" value="GPR_dom"/>
</dbReference>
<dbReference type="NCBIfam" id="NF001221">
    <property type="entry name" value="PRK00197.1"/>
    <property type="match status" value="1"/>
</dbReference>
<dbReference type="NCBIfam" id="TIGR00407">
    <property type="entry name" value="proA"/>
    <property type="match status" value="1"/>
</dbReference>
<dbReference type="PANTHER" id="PTHR11063:SF8">
    <property type="entry name" value="DELTA-1-PYRROLINE-5-CARBOXYLATE SYNTHASE"/>
    <property type="match status" value="1"/>
</dbReference>
<dbReference type="PANTHER" id="PTHR11063">
    <property type="entry name" value="GLUTAMATE SEMIALDEHYDE DEHYDROGENASE"/>
    <property type="match status" value="1"/>
</dbReference>
<dbReference type="Pfam" id="PF00171">
    <property type="entry name" value="Aldedh"/>
    <property type="match status" value="2"/>
</dbReference>
<dbReference type="PIRSF" id="PIRSF000151">
    <property type="entry name" value="GPR"/>
    <property type="match status" value="1"/>
</dbReference>
<dbReference type="SUPFAM" id="SSF53720">
    <property type="entry name" value="ALDH-like"/>
    <property type="match status" value="1"/>
</dbReference>
<dbReference type="PROSITE" id="PS01223">
    <property type="entry name" value="PROA"/>
    <property type="match status" value="1"/>
</dbReference>
<accession>A0K4I3</accession>
<gene>
    <name evidence="1" type="primary">proA</name>
    <name type="ordered locus">Bcen2424_0657</name>
</gene>
<name>PROA_BURCH</name>
<protein>
    <recommendedName>
        <fullName evidence="1">Gamma-glutamyl phosphate reductase</fullName>
        <shortName evidence="1">GPR</shortName>
        <ecNumber evidence="1">1.2.1.41</ecNumber>
    </recommendedName>
    <alternativeName>
        <fullName evidence="1">Glutamate-5-semialdehyde dehydrogenase</fullName>
    </alternativeName>
    <alternativeName>
        <fullName evidence="1">Glutamyl-gamma-semialdehyde dehydrogenase</fullName>
        <shortName evidence="1">GSA dehydrogenase</shortName>
    </alternativeName>
</protein>
<feature type="chain" id="PRO_0000340875" description="Gamma-glutamyl phosphate reductase">
    <location>
        <begin position="1"/>
        <end position="423"/>
    </location>
</feature>